<sequence length="533" mass="60661">MGCLFSKERRSGGSDMGVSERIDVSRFQTPQQQTVFHVNNGGNEGTISQLNGTSDGMMGNGRGGGGGGGAQERETLVALYPYDSRADGDLSFQKGDAMYLLDHSNCDWWYVRHQRTGQTGYVPRNFVAKQQTIESEEWYAGKIPRNRAERLVLSSHLPKGTFLIREREADTREFALTIRDTDDQRNGGTVKHYKIKRLDHDQGYFITTRRTFRSLQELVRYYSDVPDGLCCQLTFPAPRLAPTRPDLSHDTQQNWEIPRNQLHLKRKLGDGNFGEVWYGKWRGIVEVAIKTMKPGTMSPEAFLQEAQIMKQCDHPNLVKLYAVCTREEPFYIITEYMINGSLLQYLRTDGSTLGIQALVDMAAQIANGMMYLEERKLVHRDLAARNVLVGDKISGVPVVKVADFGLARKLMEEDIYEARTGAKFPIKWTAPEAATCGNFTVKSDVWSYGILLYEIMTKGQVPYPGMHNREVVEQVELGYRMPMPRGCPEQIYEEVLLKCWDKTPDRRPTFDTLYHFFDDYFVSTQPNYAPPSA</sequence>
<organism evidence="16">
    <name type="scientific">Caenorhabditis elegans</name>
    <dbReference type="NCBI Taxonomy" id="6239"/>
    <lineage>
        <taxon>Eukaryota</taxon>
        <taxon>Metazoa</taxon>
        <taxon>Ecdysozoa</taxon>
        <taxon>Nematoda</taxon>
        <taxon>Chromadorea</taxon>
        <taxon>Rhabditida</taxon>
        <taxon>Rhabditina</taxon>
        <taxon>Rhabditomorpha</taxon>
        <taxon>Rhabditoidea</taxon>
        <taxon>Rhabditidae</taxon>
        <taxon>Peloderinae</taxon>
        <taxon>Caenorhabditis</taxon>
    </lineage>
</organism>
<accession>G5EE56</accession>
<accession>W6RRW6</accession>
<accession>W6RTE9</accession>
<accession>W6SBD5</accession>
<keyword id="KW-0025">Alternative splicing</keyword>
<keyword id="KW-0067">ATP-binding</keyword>
<keyword id="KW-1003">Cell membrane</keyword>
<keyword id="KW-0966">Cell projection</keyword>
<keyword id="KW-0418">Kinase</keyword>
<keyword id="KW-0449">Lipoprotein</keyword>
<keyword id="KW-0460">Magnesium</keyword>
<keyword id="KW-0464">Manganese</keyword>
<keyword id="KW-0472">Membrane</keyword>
<keyword id="KW-0479">Metal-binding</keyword>
<keyword id="KW-0519">Myristate</keyword>
<keyword id="KW-0547">Nucleotide-binding</keyword>
<keyword id="KW-0597">Phosphoprotein</keyword>
<keyword id="KW-1185">Reference proteome</keyword>
<keyword id="KW-0727">SH2 domain</keyword>
<keyword id="KW-0728">SH3 domain</keyword>
<keyword id="KW-0808">Transferase</keyword>
<keyword id="KW-0829">Tyrosine-protein kinase</keyword>
<protein>
    <recommendedName>
        <fullName evidence="13">Tyrosine protein-kinase src-1</fullName>
        <ecNumber evidence="6 9 10 12">2.7.10.2</ecNumber>
    </recommendedName>
    <alternativeName>
        <fullName evidence="17">SRC oncogene related protein 1</fullName>
    </alternativeName>
</protein>
<gene>
    <name evidence="17" type="primary">src-1</name>
    <name evidence="17" type="ORF">Y92H12A.1</name>
</gene>
<evidence type="ECO:0000255" key="1"/>
<evidence type="ECO:0000255" key="2">
    <source>
        <dbReference type="PROSITE-ProRule" id="PRU00159"/>
    </source>
</evidence>
<evidence type="ECO:0000255" key="3">
    <source>
        <dbReference type="PROSITE-ProRule" id="PRU00191"/>
    </source>
</evidence>
<evidence type="ECO:0000255" key="4">
    <source>
        <dbReference type="PROSITE-ProRule" id="PRU00192"/>
    </source>
</evidence>
<evidence type="ECO:0000269" key="5">
    <source>
    </source>
</evidence>
<evidence type="ECO:0000269" key="6">
    <source>
    </source>
</evidence>
<evidence type="ECO:0000269" key="7">
    <source>
    </source>
</evidence>
<evidence type="ECO:0000269" key="8">
    <source>
    </source>
</evidence>
<evidence type="ECO:0000269" key="9">
    <source>
    </source>
</evidence>
<evidence type="ECO:0000269" key="10">
    <source>
    </source>
</evidence>
<evidence type="ECO:0000269" key="11">
    <source>
    </source>
</evidence>
<evidence type="ECO:0000269" key="12">
    <source>
    </source>
</evidence>
<evidence type="ECO:0000305" key="13"/>
<evidence type="ECO:0000305" key="14">
    <source>
    </source>
</evidence>
<evidence type="ECO:0000305" key="15">
    <source>
    </source>
</evidence>
<evidence type="ECO:0000312" key="16">
    <source>
        <dbReference type="Proteomes" id="UP000001940"/>
    </source>
</evidence>
<evidence type="ECO:0000312" key="17">
    <source>
        <dbReference type="WormBase" id="Y92H12A.1a"/>
    </source>
</evidence>
<evidence type="ECO:0000312" key="18">
    <source>
        <dbReference type="WormBase" id="Y92H12A.1b"/>
    </source>
</evidence>
<evidence type="ECO:0000312" key="19">
    <source>
        <dbReference type="WormBase" id="Y92H12A.1c"/>
    </source>
</evidence>
<evidence type="ECO:0000312" key="20">
    <source>
        <dbReference type="WormBase" id="Y92H12A.1d"/>
    </source>
</evidence>
<name>SRC1_CAEEL</name>
<comment type="function">
    <text evidence="5 6 7 8 9 10 11 12">Non-receptor tyrosine-protein kinase which plays a role in endoderm development by controlling spindle orientation in EMS blastomere, probably downstream of receptor mes-1. Also involved in embryonic body morphogenesis, especially in the formation of the pharynx and the intestine (PubMed:12110172, PubMed:12527374, PubMed:19210548). May be dispensable for pharyngeal muscle organization in the adult (PubMed:19210548). Probably phosphorylates netrin receptor unc-5, to regulate distal tip cell (DTC) migration during gonad development and in axon repulsion (PubMed:16024786, PubMed:16251208). Plays a role in the migration of the QR neuroblast, a precursor of the AVM neuron, and in the migration of the axon cone of AVM, ALM, CAN and PVM neurons (PubMed:16251208, PubMed:22293500). May act downstream of migratory protein mig-13 to control AVM neuron migration (PubMed:22293500). Probably downstream of integrin ina-1/pat-3, plays a role in the clearance of apoptotic cells during mid-embryogenesis (PubMed:20226672). Phosphorylates ced-1 at 'Tyr-1019' which promotes ced-1 proteasomal degradation, maintaining appropriate ced-1 levels for apoptotic cell clearance (PubMed:35929733).</text>
</comment>
<comment type="catalytic activity">
    <reaction evidence="6 9 10 12">
        <text>L-tyrosyl-[protein] + ATP = O-phospho-L-tyrosyl-[protein] + ADP + H(+)</text>
        <dbReference type="Rhea" id="RHEA:10596"/>
        <dbReference type="Rhea" id="RHEA-COMP:10136"/>
        <dbReference type="Rhea" id="RHEA-COMP:20101"/>
        <dbReference type="ChEBI" id="CHEBI:15378"/>
        <dbReference type="ChEBI" id="CHEBI:30616"/>
        <dbReference type="ChEBI" id="CHEBI:46858"/>
        <dbReference type="ChEBI" id="CHEBI:61978"/>
        <dbReference type="ChEBI" id="CHEBI:456216"/>
        <dbReference type="EC" id="2.7.10.2"/>
    </reaction>
</comment>
<comment type="cofactor">
    <cofactor evidence="15">
        <name>Mg(2+)</name>
        <dbReference type="ChEBI" id="CHEBI:18420"/>
    </cofactor>
    <cofactor evidence="10">
        <name>Mn(2+)</name>
        <dbReference type="ChEBI" id="CHEBI:29035"/>
    </cofactor>
</comment>
<comment type="activity regulation">
    <text evidence="6 10 14">May be activated by autophosphorylation (PubMed:19210548, PubMed:20226672). May be inhibited by csk-1-mediated phosphorylation (PubMed:12527374).</text>
</comment>
<comment type="subunit">
    <text evidence="7 10">Interacts (via SH2 domain and SH3 domain) with unc-5 (via cytoplasmic domain); the interaction requires kinase activity (PubMed:16024786). Interacts (when activated and phosphorylated at 'Tyr-416') with ina-1 (via cytoplasmic domain) and with ced-2 (via SH2 domain) (PubMed:20226672).</text>
</comment>
<comment type="interaction">
    <interactant intactId="EBI-6538807">
        <id>G5EE56</id>
    </interactant>
    <interactant intactId="EBI-11466207">
        <id>Q9BIF4</id>
        <label>ehs-1</label>
    </interactant>
    <organismsDiffer>false</organismsDiffer>
    <experiments>3</experiments>
</comment>
<comment type="interaction">
    <interactant intactId="EBI-6538807">
        <id>G5EE56</id>
    </interactant>
    <interactant intactId="EBI-2316106">
        <id>Q09442</id>
        <label>sap-49</label>
    </interactant>
    <organismsDiffer>false</organismsDiffer>
    <experiments>3</experiments>
</comment>
<comment type="subcellular location">
    <subcellularLocation>
        <location evidence="10">Cell membrane</location>
        <topology evidence="1">Lipid-anchor</topology>
        <orientation evidence="10">Cytoplasmic side</orientation>
    </subcellularLocation>
    <subcellularLocation>
        <location evidence="10">Cell projection</location>
        <location evidence="10">Phagocytic cup</location>
    </subcellularLocation>
    <text evidence="10">Co-localizes with ina-1 at the site of the phagosomal cup formation during apoptotic cell engulfment.</text>
</comment>
<comment type="alternative products">
    <event type="alternative splicing"/>
    <isoform>
        <id>G5EE56-1</id>
        <name evidence="17">a</name>
        <sequence type="displayed"/>
    </isoform>
    <isoform>
        <id>G5EE56-2</id>
        <name evidence="18">b</name>
        <sequence type="described" ref="VSP_057939"/>
    </isoform>
    <isoform>
        <id>G5EE56-3</id>
        <name evidence="19">c</name>
        <sequence type="described" ref="VSP_057938"/>
    </isoform>
    <isoform>
        <id>G5EE56-4</id>
        <name evidence="20">d</name>
        <sequence type="described" ref="VSP_057937"/>
    </isoform>
</comment>
<comment type="tissue specificity">
    <text evidence="6 8">Expressed in some neurons (ASE, ADF, AVA, AUA, RMDV and BAG) in the head region, anchor cell, vulva, cells around anus, body wall muscle, pharyngeal muscles in procorpus and metacorpus (PubMed:12527374). Expressed in gonadal distal tip cells (PubMed:12527374, PubMed:16251208).</text>
</comment>
<comment type="PTM">
    <text evidence="6">May be phosphorylated on Tyr-528 by csk-1.</text>
</comment>
<comment type="disruption phenotype">
    <text evidence="6 7 8 10">RNAi-mediated knockdown causes a growth arrest between gastrulation and the 2-fold stage and an increase in number of apoptotic cell corpses at the comma and 1.5-fold stages (PubMed:12527374, PubMed:16024786, PubMed:20226672). The few hermaphrodite animals reaching adulthood have gonadal defects characterized by the formation of a straight gonad resulting from defects in distal tip cells migration during the first and second turns (PubMed:16024786, PubMed:16251208).</text>
</comment>
<comment type="similarity">
    <text evidence="13">Belongs to the protein kinase superfamily. Tyr protein kinase family. SRC subfamily.</text>
</comment>
<dbReference type="EC" id="2.7.10.2" evidence="6 9 10 12"/>
<dbReference type="EMBL" id="AF475094">
    <property type="protein sequence ID" value="AAL84635.1"/>
    <property type="molecule type" value="mRNA"/>
</dbReference>
<dbReference type="EMBL" id="AF419171">
    <property type="protein sequence ID" value="AAN31394.1"/>
    <property type="molecule type" value="mRNA"/>
</dbReference>
<dbReference type="EMBL" id="BX284601">
    <property type="protein sequence ID" value="CCD71465.1"/>
    <property type="molecule type" value="Genomic_DNA"/>
</dbReference>
<dbReference type="EMBL" id="BX284601">
    <property type="protein sequence ID" value="CDM63506.1"/>
    <property type="molecule type" value="Genomic_DNA"/>
</dbReference>
<dbReference type="EMBL" id="BX284601">
    <property type="protein sequence ID" value="CDM63507.1"/>
    <property type="molecule type" value="Genomic_DNA"/>
</dbReference>
<dbReference type="EMBL" id="BX284601">
    <property type="protein sequence ID" value="CDM63508.1"/>
    <property type="molecule type" value="Genomic_DNA"/>
</dbReference>
<dbReference type="RefSeq" id="NP_001293420.1">
    <property type="nucleotide sequence ID" value="NM_001306491.1"/>
</dbReference>
<dbReference type="RefSeq" id="NP_001293421.1">
    <molecule id="G5EE56-3"/>
    <property type="nucleotide sequence ID" value="NM_001306492.4"/>
</dbReference>
<dbReference type="RefSeq" id="NP_001293422.1">
    <molecule id="G5EE56-4"/>
    <property type="nucleotide sequence ID" value="NM_001306493.3"/>
</dbReference>
<dbReference type="RefSeq" id="NP_001364774.1">
    <molecule id="G5EE56-1"/>
    <property type="nucleotide sequence ID" value="NM_001377653.2"/>
</dbReference>
<dbReference type="RefSeq" id="NP_001364829.1">
    <molecule id="G5EE56-2"/>
    <property type="nucleotide sequence ID" value="NM_001377652.2"/>
</dbReference>
<dbReference type="RefSeq" id="NP_490866.4">
    <property type="nucleotide sequence ID" value="NM_058465.5"/>
</dbReference>
<dbReference type="SMR" id="G5EE56"/>
<dbReference type="FunCoup" id="G5EE56">
    <property type="interactions" value="8"/>
</dbReference>
<dbReference type="IntAct" id="G5EE56">
    <property type="interactions" value="78"/>
</dbReference>
<dbReference type="STRING" id="6239.Y92H12A.1b.2"/>
<dbReference type="iPTMnet" id="G5EE56"/>
<dbReference type="PaxDb" id="6239-Y92H12A.1"/>
<dbReference type="PeptideAtlas" id="G5EE56"/>
<dbReference type="EnsemblMetazoa" id="Y92H12A.1a.1">
    <molecule id="G5EE56-1"/>
    <property type="protein sequence ID" value="Y92H12A.1a.1"/>
    <property type="gene ID" value="WBGene00005077"/>
</dbReference>
<dbReference type="EnsemblMetazoa" id="Y92H12A.1b.1">
    <molecule id="G5EE56-2"/>
    <property type="protein sequence ID" value="Y92H12A.1b.1"/>
    <property type="gene ID" value="WBGene00005077"/>
</dbReference>
<dbReference type="EnsemblMetazoa" id="Y92H12A.1c.1">
    <molecule id="G5EE56-3"/>
    <property type="protein sequence ID" value="Y92H12A.1c.1"/>
    <property type="gene ID" value="WBGene00005077"/>
</dbReference>
<dbReference type="EnsemblMetazoa" id="Y92H12A.1d.1">
    <molecule id="G5EE56-4"/>
    <property type="protein sequence ID" value="Y92H12A.1d.1"/>
    <property type="gene ID" value="WBGene00005077"/>
</dbReference>
<dbReference type="GeneID" id="171722"/>
<dbReference type="KEGG" id="cel:CELE_Y92H12A.1"/>
<dbReference type="AGR" id="WB:WBGene00005077"/>
<dbReference type="CTD" id="171722"/>
<dbReference type="WormBase" id="Y92H12A.1a">
    <molecule id="G5EE56-1"/>
    <property type="protein sequence ID" value="CE39993"/>
    <property type="gene ID" value="WBGene00005077"/>
    <property type="gene designation" value="src-1"/>
</dbReference>
<dbReference type="WormBase" id="Y92H12A.1b">
    <molecule id="G5EE56-2"/>
    <property type="protein sequence ID" value="CE49528"/>
    <property type="gene ID" value="WBGene00005077"/>
    <property type="gene designation" value="src-1"/>
</dbReference>
<dbReference type="WormBase" id="Y92H12A.1c">
    <molecule id="G5EE56-3"/>
    <property type="protein sequence ID" value="CE49606"/>
    <property type="gene ID" value="WBGene00005077"/>
    <property type="gene designation" value="src-1"/>
</dbReference>
<dbReference type="WormBase" id="Y92H12A.1d">
    <molecule id="G5EE56-4"/>
    <property type="protein sequence ID" value="CE49574"/>
    <property type="gene ID" value="WBGene00005077"/>
    <property type="gene designation" value="src-1"/>
</dbReference>
<dbReference type="eggNOG" id="KOG0197">
    <property type="taxonomic scope" value="Eukaryota"/>
</dbReference>
<dbReference type="GeneTree" id="ENSGT00940000166089"/>
<dbReference type="InParanoid" id="G5EE56"/>
<dbReference type="OMA" id="QVEIGYR"/>
<dbReference type="OrthoDB" id="4062651at2759"/>
<dbReference type="PhylomeDB" id="G5EE56"/>
<dbReference type="Reactome" id="R-CEL-1227986">
    <property type="pathway name" value="Signaling by ERBB2"/>
</dbReference>
<dbReference type="Reactome" id="R-CEL-1251985">
    <property type="pathway name" value="Nuclear signaling by ERBB4"/>
</dbReference>
<dbReference type="Reactome" id="R-CEL-1253288">
    <property type="pathway name" value="Downregulation of ERBB4 signaling"/>
</dbReference>
<dbReference type="Reactome" id="R-CEL-1257604">
    <property type="pathway name" value="PIP3 activates AKT signaling"/>
</dbReference>
<dbReference type="Reactome" id="R-CEL-177929">
    <property type="pathway name" value="Signaling by EGFR"/>
</dbReference>
<dbReference type="Reactome" id="R-CEL-186763">
    <property type="pathway name" value="Downstream signal transduction"/>
</dbReference>
<dbReference type="Reactome" id="R-CEL-2454202">
    <property type="pathway name" value="Fc epsilon receptor (FCERI) signaling"/>
</dbReference>
<dbReference type="Reactome" id="R-CEL-354192">
    <property type="pathway name" value="Integrin signaling"/>
</dbReference>
<dbReference type="Reactome" id="R-CEL-354194">
    <property type="pathway name" value="GRB2:SOS provides linkage to MAPK signaling for Integrins"/>
</dbReference>
<dbReference type="Reactome" id="R-CEL-373753">
    <property type="pathway name" value="Nephrin family interactions"/>
</dbReference>
<dbReference type="Reactome" id="R-CEL-375165">
    <property type="pathway name" value="NCAM signaling for neurite out-growth"/>
</dbReference>
<dbReference type="Reactome" id="R-CEL-3928662">
    <property type="pathway name" value="EPHB-mediated forward signaling"/>
</dbReference>
<dbReference type="Reactome" id="R-CEL-3928663">
    <property type="pathway name" value="EPHA-mediated growth cone collapse"/>
</dbReference>
<dbReference type="Reactome" id="R-CEL-3928664">
    <property type="pathway name" value="Ephrin signaling"/>
</dbReference>
<dbReference type="Reactome" id="R-CEL-3928665">
    <property type="pathway name" value="EPH-ephrin mediated repulsion of cells"/>
</dbReference>
<dbReference type="Reactome" id="R-CEL-399954">
    <property type="pathway name" value="Sema3A PAK dependent Axon repulsion"/>
</dbReference>
<dbReference type="Reactome" id="R-CEL-399955">
    <property type="pathway name" value="SEMA3A-Plexin repulsion signaling by inhibiting Integrin adhesion"/>
</dbReference>
<dbReference type="Reactome" id="R-CEL-399956">
    <property type="pathway name" value="CRMPs in Sema3A signaling"/>
</dbReference>
<dbReference type="Reactome" id="R-CEL-418592">
    <property type="pathway name" value="ADP signalling through P2Y purinoceptor 1"/>
</dbReference>
<dbReference type="Reactome" id="R-CEL-418594">
    <property type="pathway name" value="G alpha (i) signalling events"/>
</dbReference>
<dbReference type="Reactome" id="R-CEL-418885">
    <property type="pathway name" value="DCC mediated attractive signaling"/>
</dbReference>
<dbReference type="Reactome" id="R-CEL-430116">
    <property type="pathway name" value="GP1b-IX-V activation signalling"/>
</dbReference>
<dbReference type="Reactome" id="R-CEL-432142">
    <property type="pathway name" value="Platelet sensitization by LDL"/>
</dbReference>
<dbReference type="Reactome" id="R-CEL-437239">
    <property type="pathway name" value="Recycling pathway of L1"/>
</dbReference>
<dbReference type="Reactome" id="R-CEL-4420097">
    <property type="pathway name" value="VEGFA-VEGFR2 Pathway"/>
</dbReference>
<dbReference type="Reactome" id="R-CEL-456926">
    <property type="pathway name" value="Thrombin signalling through proteinase activated receptors (PARs)"/>
</dbReference>
<dbReference type="Reactome" id="R-CEL-5621575">
    <property type="pathway name" value="CD209 (DC-SIGN) signaling"/>
</dbReference>
<dbReference type="Reactome" id="R-CEL-5663220">
    <property type="pathway name" value="RHO GTPases Activate Formins"/>
</dbReference>
<dbReference type="Reactome" id="R-CEL-5673001">
    <property type="pathway name" value="RAF/MAP kinase cascade"/>
</dbReference>
<dbReference type="Reactome" id="R-CEL-5674135">
    <property type="pathway name" value="MAP2K and MAPK activation"/>
</dbReference>
<dbReference type="Reactome" id="R-CEL-6798695">
    <property type="pathway name" value="Neutrophil degranulation"/>
</dbReference>
<dbReference type="Reactome" id="R-CEL-6811558">
    <property type="pathway name" value="PI5P, PP2A and IER3 Regulate PI3K/AKT Signaling"/>
</dbReference>
<dbReference type="Reactome" id="R-CEL-8874081">
    <property type="pathway name" value="MET activates PTK2 signaling"/>
</dbReference>
<dbReference type="Reactome" id="R-CEL-8934903">
    <property type="pathway name" value="Receptor Mediated Mitophagy"/>
</dbReference>
<dbReference type="Reactome" id="R-CEL-8941858">
    <property type="pathway name" value="Regulation of RUNX3 expression and activity"/>
</dbReference>
<dbReference type="Reactome" id="R-CEL-9009391">
    <property type="pathway name" value="Extra-nuclear estrogen signaling"/>
</dbReference>
<dbReference type="Reactome" id="R-CEL-9013407">
    <property type="pathway name" value="RHOH GTPase cycle"/>
</dbReference>
<dbReference type="Reactome" id="R-CEL-912631">
    <property type="pathway name" value="Regulation of signaling by CBL"/>
</dbReference>
<dbReference type="SignaLink" id="G5EE56"/>
<dbReference type="PRO" id="PR:G5EE56"/>
<dbReference type="Proteomes" id="UP000001940">
    <property type="component" value="Chromosome I"/>
</dbReference>
<dbReference type="Bgee" id="WBGene00005077">
    <property type="expression patterns" value="Expressed in embryo and 3 other cell types or tissues"/>
</dbReference>
<dbReference type="GO" id="GO:0042995">
    <property type="term" value="C:cell projection"/>
    <property type="evidence" value="ECO:0007669"/>
    <property type="project" value="UniProtKB-KW"/>
</dbReference>
<dbReference type="GO" id="GO:0043292">
    <property type="term" value="C:contractile muscle fiber"/>
    <property type="evidence" value="ECO:0000314"/>
    <property type="project" value="WormBase"/>
</dbReference>
<dbReference type="GO" id="GO:0001891">
    <property type="term" value="C:phagocytic cup"/>
    <property type="evidence" value="ECO:0000314"/>
    <property type="project" value="WormBase"/>
</dbReference>
<dbReference type="GO" id="GO:0005886">
    <property type="term" value="C:plasma membrane"/>
    <property type="evidence" value="ECO:0000318"/>
    <property type="project" value="GO_Central"/>
</dbReference>
<dbReference type="GO" id="GO:0005524">
    <property type="term" value="F:ATP binding"/>
    <property type="evidence" value="ECO:0007669"/>
    <property type="project" value="UniProtKB-KW"/>
</dbReference>
<dbReference type="GO" id="GO:0046872">
    <property type="term" value="F:metal ion binding"/>
    <property type="evidence" value="ECO:0007669"/>
    <property type="project" value="UniProtKB-KW"/>
</dbReference>
<dbReference type="GO" id="GO:1990890">
    <property type="term" value="F:netrin receptor binding"/>
    <property type="evidence" value="ECO:0000353"/>
    <property type="project" value="UniProtKB"/>
</dbReference>
<dbReference type="GO" id="GO:0004715">
    <property type="term" value="F:non-membrane spanning protein tyrosine kinase activity"/>
    <property type="evidence" value="ECO:0000314"/>
    <property type="project" value="WormBase"/>
</dbReference>
<dbReference type="GO" id="GO:0004713">
    <property type="term" value="F:protein tyrosine kinase activity"/>
    <property type="evidence" value="ECO:0000314"/>
    <property type="project" value="WormBase"/>
</dbReference>
<dbReference type="GO" id="GO:0005102">
    <property type="term" value="F:signaling receptor binding"/>
    <property type="evidence" value="ECO:0000318"/>
    <property type="project" value="GO_Central"/>
</dbReference>
<dbReference type="GO" id="GO:0008595">
    <property type="term" value="P:anterior/posterior axis specification, embryo"/>
    <property type="evidence" value="ECO:0000315"/>
    <property type="project" value="UniProtKB"/>
</dbReference>
<dbReference type="GO" id="GO:0030154">
    <property type="term" value="P:cell differentiation"/>
    <property type="evidence" value="ECO:0000318"/>
    <property type="project" value="GO_Central"/>
</dbReference>
<dbReference type="GO" id="GO:0007169">
    <property type="term" value="P:cell surface receptor protein tyrosine kinase signaling pathway"/>
    <property type="evidence" value="ECO:0000318"/>
    <property type="project" value="GO_Central"/>
</dbReference>
<dbReference type="GO" id="GO:0071679">
    <property type="term" value="P:commissural neuron axon guidance"/>
    <property type="evidence" value="ECO:0000316"/>
    <property type="project" value="UniProtKB"/>
</dbReference>
<dbReference type="GO" id="GO:0009792">
    <property type="term" value="P:embryo development ending in birth or egg hatching"/>
    <property type="evidence" value="ECO:0000315"/>
    <property type="project" value="WormBase"/>
</dbReference>
<dbReference type="GO" id="GO:0048557">
    <property type="term" value="P:embryonic digestive tract morphogenesis"/>
    <property type="evidence" value="ECO:0000315"/>
    <property type="project" value="UniProtKB"/>
</dbReference>
<dbReference type="GO" id="GO:0001714">
    <property type="term" value="P:endodermal cell fate specification"/>
    <property type="evidence" value="ECO:0000316"/>
    <property type="project" value="WormBase"/>
</dbReference>
<dbReference type="GO" id="GO:0000132">
    <property type="term" value="P:establishment of mitotic spindle orientation"/>
    <property type="evidence" value="ECO:0000315"/>
    <property type="project" value="UniProtKB"/>
</dbReference>
<dbReference type="GO" id="GO:0035262">
    <property type="term" value="P:gonad morphogenesis"/>
    <property type="evidence" value="ECO:0000315"/>
    <property type="project" value="UniProtKB"/>
</dbReference>
<dbReference type="GO" id="GO:0070986">
    <property type="term" value="P:left/right axis specification"/>
    <property type="evidence" value="ECO:0000316"/>
    <property type="project" value="UniProtKB"/>
</dbReference>
<dbReference type="GO" id="GO:0040019">
    <property type="term" value="P:positive regulation of embryonic development"/>
    <property type="evidence" value="ECO:0000315"/>
    <property type="project" value="UniProtKB"/>
</dbReference>
<dbReference type="GO" id="GO:0040017">
    <property type="term" value="P:positive regulation of locomotion"/>
    <property type="evidence" value="ECO:0000316"/>
    <property type="project" value="UniProtKB"/>
</dbReference>
<dbReference type="GO" id="GO:0050731">
    <property type="term" value="P:positive regulation of peptidyl-tyrosine phosphorylation"/>
    <property type="evidence" value="ECO:0000315"/>
    <property type="project" value="UniProtKB"/>
</dbReference>
<dbReference type="CDD" id="cd05034">
    <property type="entry name" value="PTKc_Src_like"/>
    <property type="match status" value="1"/>
</dbReference>
<dbReference type="CDD" id="cd09933">
    <property type="entry name" value="SH2_Src_family"/>
    <property type="match status" value="1"/>
</dbReference>
<dbReference type="CDD" id="cd11845">
    <property type="entry name" value="SH3_Src_like"/>
    <property type="match status" value="1"/>
</dbReference>
<dbReference type="FunFam" id="1.10.510.10:FF:000399">
    <property type="entry name" value="Tyrosine-protein kinase"/>
    <property type="match status" value="1"/>
</dbReference>
<dbReference type="FunFam" id="2.30.30.40:FF:000253">
    <property type="entry name" value="Tyrosine-protein kinase"/>
    <property type="match status" value="1"/>
</dbReference>
<dbReference type="FunFam" id="3.30.200.20:FF:000053">
    <property type="entry name" value="Tyrosine-protein kinase"/>
    <property type="match status" value="1"/>
</dbReference>
<dbReference type="FunFam" id="3.30.505.10:FF:000115">
    <property type="entry name" value="Tyrosine-protein kinase"/>
    <property type="match status" value="1"/>
</dbReference>
<dbReference type="Gene3D" id="3.30.200.20">
    <property type="entry name" value="Phosphorylase Kinase, domain 1"/>
    <property type="match status" value="1"/>
</dbReference>
<dbReference type="Gene3D" id="3.30.505.10">
    <property type="entry name" value="SH2 domain"/>
    <property type="match status" value="1"/>
</dbReference>
<dbReference type="Gene3D" id="2.30.30.40">
    <property type="entry name" value="SH3 Domains"/>
    <property type="match status" value="1"/>
</dbReference>
<dbReference type="Gene3D" id="1.10.510.10">
    <property type="entry name" value="Transferase(Phosphotransferase) domain 1"/>
    <property type="match status" value="1"/>
</dbReference>
<dbReference type="InterPro" id="IPR011009">
    <property type="entry name" value="Kinase-like_dom_sf"/>
</dbReference>
<dbReference type="InterPro" id="IPR050198">
    <property type="entry name" value="Non-receptor_tyrosine_kinases"/>
</dbReference>
<dbReference type="InterPro" id="IPR000719">
    <property type="entry name" value="Prot_kinase_dom"/>
</dbReference>
<dbReference type="InterPro" id="IPR017441">
    <property type="entry name" value="Protein_kinase_ATP_BS"/>
</dbReference>
<dbReference type="InterPro" id="IPR001245">
    <property type="entry name" value="Ser-Thr/Tyr_kinase_cat_dom"/>
</dbReference>
<dbReference type="InterPro" id="IPR000980">
    <property type="entry name" value="SH2"/>
</dbReference>
<dbReference type="InterPro" id="IPR036860">
    <property type="entry name" value="SH2_dom_sf"/>
</dbReference>
<dbReference type="InterPro" id="IPR036028">
    <property type="entry name" value="SH3-like_dom_sf"/>
</dbReference>
<dbReference type="InterPro" id="IPR001452">
    <property type="entry name" value="SH3_domain"/>
</dbReference>
<dbReference type="InterPro" id="IPR008266">
    <property type="entry name" value="Tyr_kinase_AS"/>
</dbReference>
<dbReference type="InterPro" id="IPR020635">
    <property type="entry name" value="Tyr_kinase_cat_dom"/>
</dbReference>
<dbReference type="PANTHER" id="PTHR24418">
    <property type="entry name" value="TYROSINE-PROTEIN KINASE"/>
    <property type="match status" value="1"/>
</dbReference>
<dbReference type="Pfam" id="PF07714">
    <property type="entry name" value="PK_Tyr_Ser-Thr"/>
    <property type="match status" value="1"/>
</dbReference>
<dbReference type="Pfam" id="PF00017">
    <property type="entry name" value="SH2"/>
    <property type="match status" value="1"/>
</dbReference>
<dbReference type="Pfam" id="PF00018">
    <property type="entry name" value="SH3_1"/>
    <property type="match status" value="1"/>
</dbReference>
<dbReference type="PRINTS" id="PR00401">
    <property type="entry name" value="SH2DOMAIN"/>
</dbReference>
<dbReference type="PRINTS" id="PR00452">
    <property type="entry name" value="SH3DOMAIN"/>
</dbReference>
<dbReference type="PRINTS" id="PR00109">
    <property type="entry name" value="TYRKINASE"/>
</dbReference>
<dbReference type="SMART" id="SM00252">
    <property type="entry name" value="SH2"/>
    <property type="match status" value="1"/>
</dbReference>
<dbReference type="SMART" id="SM00326">
    <property type="entry name" value="SH3"/>
    <property type="match status" value="1"/>
</dbReference>
<dbReference type="SMART" id="SM00219">
    <property type="entry name" value="TyrKc"/>
    <property type="match status" value="1"/>
</dbReference>
<dbReference type="SUPFAM" id="SSF56112">
    <property type="entry name" value="Protein kinase-like (PK-like)"/>
    <property type="match status" value="1"/>
</dbReference>
<dbReference type="SUPFAM" id="SSF55550">
    <property type="entry name" value="SH2 domain"/>
    <property type="match status" value="1"/>
</dbReference>
<dbReference type="SUPFAM" id="SSF50044">
    <property type="entry name" value="SH3-domain"/>
    <property type="match status" value="1"/>
</dbReference>
<dbReference type="PROSITE" id="PS00107">
    <property type="entry name" value="PROTEIN_KINASE_ATP"/>
    <property type="match status" value="1"/>
</dbReference>
<dbReference type="PROSITE" id="PS50011">
    <property type="entry name" value="PROTEIN_KINASE_DOM"/>
    <property type="match status" value="1"/>
</dbReference>
<dbReference type="PROSITE" id="PS00109">
    <property type="entry name" value="PROTEIN_KINASE_TYR"/>
    <property type="match status" value="1"/>
</dbReference>
<dbReference type="PROSITE" id="PS50001">
    <property type="entry name" value="SH2"/>
    <property type="match status" value="1"/>
</dbReference>
<dbReference type="PROSITE" id="PS50002">
    <property type="entry name" value="SH3"/>
    <property type="match status" value="1"/>
</dbReference>
<reference evidence="13" key="1">
    <citation type="journal article" date="2002" name="Dev. Cell">
        <title>SRC-1 and Wnt signaling act together to specify endoderm and to control cleavage orientation in early C. elegans embryos.</title>
        <authorList>
            <person name="Bei Y."/>
            <person name="Hogan J."/>
            <person name="Berkowitz L.A."/>
            <person name="Soto M."/>
            <person name="Rocheleau C.E."/>
            <person name="Pang K.M."/>
            <person name="Collins J."/>
            <person name="Mello C.C."/>
        </authorList>
    </citation>
    <scope>NUCLEOTIDE SEQUENCE [MRNA] (ISOFORM A)</scope>
    <scope>FUNCTION</scope>
</reference>
<reference evidence="13" key="2">
    <citation type="journal article" date="2003" name="FEBS Lett.">
        <title>Distinct roles of the Src family kinases, SRC-1 and KIN-22, that are negatively regulated by CSK-1 in C. elegans.</title>
        <authorList>
            <person name="Hirose T."/>
            <person name="Koga M."/>
            <person name="Ohshima Y."/>
            <person name="Okada M."/>
        </authorList>
    </citation>
    <scope>NUCLEOTIDE SEQUENCE [MRNA] (ISOFORM A)</scope>
    <scope>FUNCTION</scope>
    <scope>CATALYTIC ACTIVITY</scope>
    <scope>ACTIVITY REGULATION</scope>
    <scope>PHOSPHORYLATION AT TYR-528</scope>
    <scope>DISRUPTION PHENOTYPE</scope>
    <scope>MUTAGENESIS OF TYR-528</scope>
</reference>
<reference evidence="16" key="3">
    <citation type="journal article" date="1998" name="Science">
        <title>Genome sequence of the nematode C. elegans: a platform for investigating biology.</title>
        <authorList>
            <consortium name="The C. elegans sequencing consortium"/>
        </authorList>
    </citation>
    <scope>NUCLEOTIDE SEQUENCE [LARGE SCALE GENOMIC DNA]</scope>
    <source>
        <strain evidence="16">Bristol N2</strain>
    </source>
</reference>
<reference evidence="13" key="4">
    <citation type="journal article" date="2005" name="Development">
        <title>SRC-1, a non-receptor type of protein tyrosine kinase, controls the direction of cell and growth cone migration in C. elegans.</title>
        <authorList>
            <person name="Itoh B."/>
            <person name="Hirose T."/>
            <person name="Takata N."/>
            <person name="Nishiwaki K."/>
            <person name="Koga M."/>
            <person name="Ohshima Y."/>
            <person name="Okada M."/>
        </authorList>
    </citation>
    <scope>FUNCTION</scope>
    <scope>TISSUE SPECIFICITY</scope>
    <scope>DISRUPTION PHENOTYPE</scope>
    <scope>MUTAGENESIS OF LYS-290</scope>
</reference>
<reference evidence="13" key="5">
    <citation type="journal article" date="2005" name="Mol. Cell. Biol.">
        <title>SRC-1 mediates UNC-5 signaling in Caenorhabditis elegans.</title>
        <authorList>
            <person name="Lee J."/>
            <person name="Li W."/>
            <person name="Guan K.L."/>
        </authorList>
    </citation>
    <scope>FUNCTION</scope>
    <scope>INTERACTION WITH UNC-5</scope>
    <scope>DISRUPTION PHENOTYPE</scope>
    <scope>MUTAGENESIS OF 108-TRP-TRP-109; ARG-165 AND LYS-290</scope>
</reference>
<reference evidence="13" key="6">
    <citation type="journal article" date="2009" name="Genes Cells">
        <title>Non-receptor tyrosine kinase CSK-1 controls pharyngeal muscle organization in Caenorhabditis elegans.</title>
        <authorList>
            <person name="Takata N."/>
            <person name="Itoh B."/>
            <person name="Misaki K."/>
            <person name="Hirose T."/>
            <person name="Yonemura S."/>
            <person name="Okada M."/>
        </authorList>
    </citation>
    <scope>FUNCTION</scope>
    <scope>CATALYTIC ACTIVITY</scope>
    <scope>ACTIVITY REGULATION</scope>
    <scope>PHOSPHORYLATION AT TYR-416</scope>
    <scope>MUTAGENESIS OF TYR-416</scope>
</reference>
<reference evidence="13" key="7">
    <citation type="journal article" date="2010" name="Curr. Biol.">
        <title>Engulfment of apoptotic cells in C. elegans is mediated by integrin alpha/SRC signaling.</title>
        <authorList>
            <person name="Hsu T.Y."/>
            <person name="Wu Y.C."/>
        </authorList>
    </citation>
    <scope>FUNCTION</scope>
    <scope>CATALYTIC ACTIVITY</scope>
    <scope>COFACTOR</scope>
    <scope>ACTIVITY REGULATION</scope>
    <scope>INTERACTION WITH INA-1 AND CED-2</scope>
    <scope>SUBCELLULAR LOCATION</scope>
    <scope>PHOSPHORYLATION AT TYR-416</scope>
    <scope>DISRUPTION PHENOTYPE</scope>
    <scope>MUTAGENESIS OF TYR-416</scope>
</reference>
<reference key="8">
    <citation type="journal article" date="2012" name="FEBS Lett.">
        <title>MIG-13 controls anteroposterior cell migration by interacting with UNC-71/ADM-1 and SRC-1 in Caenorhabditis elegans.</title>
        <authorList>
            <person name="Masuda H."/>
            <person name="Nakamura K."/>
            <person name="Takata N."/>
            <person name="Itoh B."/>
            <person name="Hirose T."/>
            <person name="Moribe H."/>
            <person name="Mekada E."/>
            <person name="Okada M."/>
        </authorList>
    </citation>
    <scope>FUNCTION</scope>
</reference>
<reference evidence="13" key="9">
    <citation type="journal article" date="2022" name="Elife">
        <title>trim-21 promotes proteasomal degradation of CED-1 for apoptotic cell clearance in C. elegans.</title>
        <authorList>
            <person name="Yuan L."/>
            <person name="Li P."/>
            <person name="Jing H."/>
            <person name="Zheng Q."/>
            <person name="Xiao H."/>
        </authorList>
    </citation>
    <scope>FUNCTION</scope>
    <scope>CATALYTIC ACTIVITY</scope>
</reference>
<proteinExistence type="evidence at protein level"/>
<feature type="initiator methionine" description="Removed" evidence="1">
    <location>
        <position position="1"/>
    </location>
</feature>
<feature type="chain" id="PRO_0000434507" description="Tyrosine protein-kinase src-1" evidence="13">
    <location>
        <begin position="2"/>
        <end position="533"/>
    </location>
</feature>
<feature type="domain" description="SH3" evidence="4">
    <location>
        <begin position="71"/>
        <end position="132"/>
    </location>
</feature>
<feature type="domain" description="SH2" evidence="3">
    <location>
        <begin position="138"/>
        <end position="237"/>
    </location>
</feature>
<feature type="domain" description="Protein kinase" evidence="2">
    <location>
        <begin position="262"/>
        <end position="521"/>
    </location>
</feature>
<feature type="active site" description="Proton acceptor" evidence="2">
    <location>
        <position position="381"/>
    </location>
</feature>
<feature type="binding site" evidence="2">
    <location>
        <begin position="268"/>
        <end position="276"/>
    </location>
    <ligand>
        <name>ATP</name>
        <dbReference type="ChEBI" id="CHEBI:30616"/>
    </ligand>
</feature>
<feature type="binding site" evidence="2">
    <location>
        <position position="290"/>
    </location>
    <ligand>
        <name>ATP</name>
        <dbReference type="ChEBI" id="CHEBI:30616"/>
    </ligand>
</feature>
<feature type="modified residue" description="Phosphotyrosine; by autocatalysis" evidence="9 10">
    <location>
        <position position="416"/>
    </location>
</feature>
<feature type="modified residue" description="Phosphotyrosine" evidence="6">
    <location>
        <position position="528"/>
    </location>
</feature>
<feature type="lipid moiety-binding region" description="N-myristoyl glycine" evidence="1">
    <location>
        <position position="2"/>
    </location>
</feature>
<feature type="splice variant" id="VSP_057937" description="In isoform d." evidence="13">
    <location>
        <begin position="1"/>
        <end position="308"/>
    </location>
</feature>
<feature type="splice variant" id="VSP_057938" description="In isoform c." evidence="13">
    <location>
        <begin position="1"/>
        <end position="56"/>
    </location>
</feature>
<feature type="splice variant" id="VSP_057939" description="In isoform b." evidence="13">
    <original>R</original>
    <variation>RYPRR</variation>
    <location>
        <position position="26"/>
    </location>
</feature>
<feature type="mutagenesis site" description="Partial loss of interaction with unc-5." evidence="7">
    <original>WW</original>
    <variation>RR</variation>
    <location>
        <begin position="108"/>
        <end position="109"/>
    </location>
</feature>
<feature type="mutagenesis site" description="Loss of interaction with unc-5." evidence="7">
    <original>R</original>
    <variation>A</variation>
    <location>
        <position position="165"/>
    </location>
</feature>
<feature type="mutagenesis site" description="Probable loss of kinase activity. Gonadal defects characterized by the formation of a straight gonad resulting from defects in the first and second turns during development. Abnormal migration of AVM and abnormal guidance of PVM neuron axon." evidence="7 8">
    <original>K</original>
    <variation>M</variation>
    <location>
        <position position="290"/>
    </location>
</feature>
<feature type="mutagenesis site" description="Abolishes phosphorylation which results in loss of kinase activity. Loss of interaction with ina-1 and ced-2." evidence="9 10">
    <original>Y</original>
    <variation>F</variation>
    <location>
        <position position="416"/>
    </location>
</feature>
<feature type="mutagenesis site" description="Abolishes phosphorylation which results in constitutive activation." evidence="6">
    <original>Y</original>
    <variation>F</variation>
    <location>
        <position position="528"/>
    </location>
</feature>